<organism>
    <name type="scientific">Nostoc sp. (strain PCC 7120 / SAG 25.82 / UTEX 2576)</name>
    <dbReference type="NCBI Taxonomy" id="103690"/>
    <lineage>
        <taxon>Bacteria</taxon>
        <taxon>Bacillati</taxon>
        <taxon>Cyanobacteriota</taxon>
        <taxon>Cyanophyceae</taxon>
        <taxon>Nostocales</taxon>
        <taxon>Nostocaceae</taxon>
        <taxon>Nostoc</taxon>
    </lineage>
</organism>
<keyword id="KW-0963">Cytoplasm</keyword>
<keyword id="KW-0350">Heme biosynthesis</keyword>
<keyword id="KW-0408">Iron</keyword>
<keyword id="KW-0456">Lyase</keyword>
<keyword id="KW-0479">Metal-binding</keyword>
<keyword id="KW-0627">Porphyrin biosynthesis</keyword>
<keyword id="KW-1185">Reference proteome</keyword>
<proteinExistence type="inferred from homology"/>
<name>HEMH_NOSS1</name>
<protein>
    <recommendedName>
        <fullName evidence="1">Ferrochelatase</fullName>
        <ecNumber evidence="1">4.98.1.1</ecNumber>
    </recommendedName>
    <alternativeName>
        <fullName evidence="1">Heme synthase</fullName>
    </alternativeName>
    <alternativeName>
        <fullName evidence="1">Protoheme ferro-lyase</fullName>
    </alternativeName>
</protein>
<comment type="function">
    <text evidence="1">Catalyzes the ferrous insertion into protoporphyrin IX.</text>
</comment>
<comment type="catalytic activity">
    <reaction evidence="1">
        <text>heme b + 2 H(+) = protoporphyrin IX + Fe(2+)</text>
        <dbReference type="Rhea" id="RHEA:22584"/>
        <dbReference type="ChEBI" id="CHEBI:15378"/>
        <dbReference type="ChEBI" id="CHEBI:29033"/>
        <dbReference type="ChEBI" id="CHEBI:57306"/>
        <dbReference type="ChEBI" id="CHEBI:60344"/>
        <dbReference type="EC" id="4.98.1.1"/>
    </reaction>
</comment>
<comment type="pathway">
    <text evidence="1">Porphyrin-containing compound metabolism; protoheme biosynthesis; protoheme from protoporphyrin-IX: step 1/1.</text>
</comment>
<comment type="subcellular location">
    <subcellularLocation>
        <location evidence="1">Cytoplasm</location>
    </subcellularLocation>
</comment>
<comment type="similarity">
    <text evidence="1">Belongs to the ferrochelatase family.</text>
</comment>
<dbReference type="EC" id="4.98.1.1" evidence="1"/>
<dbReference type="EMBL" id="BA000019">
    <property type="protein sequence ID" value="BAB75450.1"/>
    <property type="molecule type" value="Genomic_DNA"/>
</dbReference>
<dbReference type="PIR" id="AH2274">
    <property type="entry name" value="AH2274"/>
</dbReference>
<dbReference type="RefSeq" id="WP_010997892.1">
    <property type="nucleotide sequence ID" value="NZ_RSCN01000011.1"/>
</dbReference>
<dbReference type="SMR" id="Q8YQR8"/>
<dbReference type="STRING" id="103690.gene:10495793"/>
<dbReference type="KEGG" id="ana:alr3751"/>
<dbReference type="eggNOG" id="COG0276">
    <property type="taxonomic scope" value="Bacteria"/>
</dbReference>
<dbReference type="OrthoDB" id="9809741at2"/>
<dbReference type="UniPathway" id="UPA00252">
    <property type="reaction ID" value="UER00325"/>
</dbReference>
<dbReference type="Proteomes" id="UP000002483">
    <property type="component" value="Chromosome"/>
</dbReference>
<dbReference type="GO" id="GO:0005737">
    <property type="term" value="C:cytoplasm"/>
    <property type="evidence" value="ECO:0007669"/>
    <property type="project" value="UniProtKB-SubCell"/>
</dbReference>
<dbReference type="GO" id="GO:0004325">
    <property type="term" value="F:ferrochelatase activity"/>
    <property type="evidence" value="ECO:0007669"/>
    <property type="project" value="UniProtKB-UniRule"/>
</dbReference>
<dbReference type="GO" id="GO:0046872">
    <property type="term" value="F:metal ion binding"/>
    <property type="evidence" value="ECO:0007669"/>
    <property type="project" value="UniProtKB-KW"/>
</dbReference>
<dbReference type="GO" id="GO:0006783">
    <property type="term" value="P:heme biosynthetic process"/>
    <property type="evidence" value="ECO:0007669"/>
    <property type="project" value="UniProtKB-UniRule"/>
</dbReference>
<dbReference type="CDD" id="cd00419">
    <property type="entry name" value="Ferrochelatase_C"/>
    <property type="match status" value="1"/>
</dbReference>
<dbReference type="CDD" id="cd03411">
    <property type="entry name" value="Ferrochelatase_N"/>
    <property type="match status" value="1"/>
</dbReference>
<dbReference type="FunFam" id="3.40.50.1400:FF:000006">
    <property type="entry name" value="Ferrochelatase"/>
    <property type="match status" value="1"/>
</dbReference>
<dbReference type="Gene3D" id="3.40.50.1400">
    <property type="match status" value="2"/>
</dbReference>
<dbReference type="HAMAP" id="MF_00323">
    <property type="entry name" value="Ferrochelatase"/>
    <property type="match status" value="1"/>
</dbReference>
<dbReference type="InterPro" id="IPR001015">
    <property type="entry name" value="Ferrochelatase"/>
</dbReference>
<dbReference type="InterPro" id="IPR019772">
    <property type="entry name" value="Ferrochelatase_AS"/>
</dbReference>
<dbReference type="InterPro" id="IPR033644">
    <property type="entry name" value="Ferrochelatase_C"/>
</dbReference>
<dbReference type="InterPro" id="IPR033659">
    <property type="entry name" value="Ferrochelatase_N"/>
</dbReference>
<dbReference type="NCBIfam" id="TIGR00109">
    <property type="entry name" value="hemH"/>
    <property type="match status" value="1"/>
</dbReference>
<dbReference type="PANTHER" id="PTHR11108">
    <property type="entry name" value="FERROCHELATASE"/>
    <property type="match status" value="1"/>
</dbReference>
<dbReference type="PANTHER" id="PTHR11108:SF1">
    <property type="entry name" value="FERROCHELATASE, MITOCHONDRIAL"/>
    <property type="match status" value="1"/>
</dbReference>
<dbReference type="Pfam" id="PF00762">
    <property type="entry name" value="Ferrochelatase"/>
    <property type="match status" value="1"/>
</dbReference>
<dbReference type="SUPFAM" id="SSF53800">
    <property type="entry name" value="Chelatase"/>
    <property type="match status" value="1"/>
</dbReference>
<dbReference type="SUPFAM" id="SSF103511">
    <property type="entry name" value="Chlorophyll a-b binding protein"/>
    <property type="match status" value="1"/>
</dbReference>
<dbReference type="PROSITE" id="PS00534">
    <property type="entry name" value="FERROCHELATASE"/>
    <property type="match status" value="1"/>
</dbReference>
<reference key="1">
    <citation type="journal article" date="2001" name="DNA Res.">
        <title>Complete genomic sequence of the filamentous nitrogen-fixing cyanobacterium Anabaena sp. strain PCC 7120.</title>
        <authorList>
            <person name="Kaneko T."/>
            <person name="Nakamura Y."/>
            <person name="Wolk C.P."/>
            <person name="Kuritz T."/>
            <person name="Sasamoto S."/>
            <person name="Watanabe A."/>
            <person name="Iriguchi M."/>
            <person name="Ishikawa A."/>
            <person name="Kawashima K."/>
            <person name="Kimura T."/>
            <person name="Kishida Y."/>
            <person name="Kohara M."/>
            <person name="Matsumoto M."/>
            <person name="Matsuno A."/>
            <person name="Muraki A."/>
            <person name="Nakazaki N."/>
            <person name="Shimpo S."/>
            <person name="Sugimoto M."/>
            <person name="Takazawa M."/>
            <person name="Yamada M."/>
            <person name="Yasuda M."/>
            <person name="Tabata S."/>
        </authorList>
    </citation>
    <scope>NUCLEOTIDE SEQUENCE [LARGE SCALE GENOMIC DNA]</scope>
    <source>
        <strain>PCC 7120 / SAG 25.82 / UTEX 2576</strain>
    </source>
</reference>
<gene>
    <name evidence="1" type="primary">hemH</name>
    <name type="ordered locus">alr3751</name>
</gene>
<feature type="chain" id="PRO_0000175100" description="Ferrochelatase">
    <location>
        <begin position="1"/>
        <end position="388"/>
    </location>
</feature>
<feature type="binding site" evidence="1">
    <location>
        <position position="196"/>
    </location>
    <ligand>
        <name>Fe cation</name>
        <dbReference type="ChEBI" id="CHEBI:24875"/>
    </ligand>
</feature>
<feature type="binding site" evidence="1">
    <location>
        <position position="277"/>
    </location>
    <ligand>
        <name>Fe cation</name>
        <dbReference type="ChEBI" id="CHEBI:24875"/>
    </ligand>
</feature>
<sequence length="388" mass="44305">MGRVGVLLLNLGGPDKLEDVAPFLFNLFSDPEIIRLPFRWLQKPLAWFIASRRTKTSQENYKQIGGGSPLRRITEAQGEALKEQLHYLGQEANIYVGMRYWHPYTEEAIALLTQDNLDNLVILPLYPQFSISTSGSSFRLLERLWQEDPKLQRLEYTVIPSWYKEPGYLQAMAELIRQEIEQFPHPDQVHVFFSAHGVPKSYVEEAGDPYQQEIEECTALIMQTLNRPNPHTLAYQSRVGPVEWLQPYTEDALKELGAQGVKDLVVVPISFVSEHIETLQEIDIEYREIAEEAGIHNFRRVPAPNTHPVFIRALADLVIDALNKPSFKLSQAAQIKKMVKMYPPESWEWGMTSSAEVWNGRIAMLGFIALIIELVTGQGLLHMIGLLQ</sequence>
<accession>Q8YQR8</accession>
<evidence type="ECO:0000255" key="1">
    <source>
        <dbReference type="HAMAP-Rule" id="MF_00323"/>
    </source>
</evidence>